<gene>
    <name evidence="9" type="primary">CKX9</name>
    <name evidence="14" type="ordered locus">Os05g0374200</name>
    <name evidence="10" type="ordered locus">LOC_Os05g31040</name>
    <name evidence="12" type="ORF">OJ1005_E12.3</name>
    <name evidence="15" type="ORF">OsJ_18319</name>
    <name evidence="13" type="ORF">OSJNBa0025P09.18</name>
</gene>
<reference key="1">
    <citation type="journal article" date="2005" name="Mol. Genet. Genomics">
        <title>A fine physical map of the rice chromosome 5.</title>
        <authorList>
            <person name="Cheng C.-H."/>
            <person name="Chung M.C."/>
            <person name="Liu S.-M."/>
            <person name="Chen S.-K."/>
            <person name="Kao F.Y."/>
            <person name="Lin S.-J."/>
            <person name="Hsiao S.-H."/>
            <person name="Tseng I.C."/>
            <person name="Hsing Y.-I.C."/>
            <person name="Wu H.-P."/>
            <person name="Chen C.-S."/>
            <person name="Shaw J.-F."/>
            <person name="Wu J."/>
            <person name="Matsumoto T."/>
            <person name="Sasaki T."/>
            <person name="Chen H.-C."/>
            <person name="Chow T.-Y."/>
        </authorList>
    </citation>
    <scope>NUCLEOTIDE SEQUENCE [LARGE SCALE GENOMIC DNA]</scope>
    <source>
        <strain>cv. Nipponbare</strain>
    </source>
</reference>
<reference key="2">
    <citation type="journal article" date="2005" name="Nature">
        <title>The map-based sequence of the rice genome.</title>
        <authorList>
            <consortium name="International rice genome sequencing project (IRGSP)"/>
        </authorList>
    </citation>
    <scope>NUCLEOTIDE SEQUENCE [LARGE SCALE GENOMIC DNA]</scope>
    <source>
        <strain>cv. Nipponbare</strain>
    </source>
</reference>
<reference key="3">
    <citation type="journal article" date="2008" name="Nucleic Acids Res.">
        <title>The rice annotation project database (RAP-DB): 2008 update.</title>
        <authorList>
            <consortium name="The rice annotation project (RAP)"/>
        </authorList>
    </citation>
    <scope>GENOME REANNOTATION</scope>
    <source>
        <strain>cv. Nipponbare</strain>
    </source>
</reference>
<reference key="4">
    <citation type="journal article" date="2013" name="Rice">
        <title>Improvement of the Oryza sativa Nipponbare reference genome using next generation sequence and optical map data.</title>
        <authorList>
            <person name="Kawahara Y."/>
            <person name="de la Bastide M."/>
            <person name="Hamilton J.P."/>
            <person name="Kanamori H."/>
            <person name="McCombie W.R."/>
            <person name="Ouyang S."/>
            <person name="Schwartz D.C."/>
            <person name="Tanaka T."/>
            <person name="Wu J."/>
            <person name="Zhou S."/>
            <person name="Childs K.L."/>
            <person name="Davidson R.M."/>
            <person name="Lin H."/>
            <person name="Quesada-Ocampo L."/>
            <person name="Vaillancourt B."/>
            <person name="Sakai H."/>
            <person name="Lee S.S."/>
            <person name="Kim J."/>
            <person name="Numa H."/>
            <person name="Itoh T."/>
            <person name="Buell C.R."/>
            <person name="Matsumoto T."/>
        </authorList>
    </citation>
    <scope>GENOME REANNOTATION</scope>
    <source>
        <strain>cv. Nipponbare</strain>
    </source>
</reference>
<reference key="5">
    <citation type="journal article" date="2005" name="PLoS Biol.">
        <title>The genomes of Oryza sativa: a history of duplications.</title>
        <authorList>
            <person name="Yu J."/>
            <person name="Wang J."/>
            <person name="Lin W."/>
            <person name="Li S."/>
            <person name="Li H."/>
            <person name="Zhou J."/>
            <person name="Ni P."/>
            <person name="Dong W."/>
            <person name="Hu S."/>
            <person name="Zeng C."/>
            <person name="Zhang J."/>
            <person name="Zhang Y."/>
            <person name="Li R."/>
            <person name="Xu Z."/>
            <person name="Li S."/>
            <person name="Li X."/>
            <person name="Zheng H."/>
            <person name="Cong L."/>
            <person name="Lin L."/>
            <person name="Yin J."/>
            <person name="Geng J."/>
            <person name="Li G."/>
            <person name="Shi J."/>
            <person name="Liu J."/>
            <person name="Lv H."/>
            <person name="Li J."/>
            <person name="Wang J."/>
            <person name="Deng Y."/>
            <person name="Ran L."/>
            <person name="Shi X."/>
            <person name="Wang X."/>
            <person name="Wu Q."/>
            <person name="Li C."/>
            <person name="Ren X."/>
            <person name="Wang J."/>
            <person name="Wang X."/>
            <person name="Li D."/>
            <person name="Liu D."/>
            <person name="Zhang X."/>
            <person name="Ji Z."/>
            <person name="Zhao W."/>
            <person name="Sun Y."/>
            <person name="Zhang Z."/>
            <person name="Bao J."/>
            <person name="Han Y."/>
            <person name="Dong L."/>
            <person name="Ji J."/>
            <person name="Chen P."/>
            <person name="Wu S."/>
            <person name="Liu J."/>
            <person name="Xiao Y."/>
            <person name="Bu D."/>
            <person name="Tan J."/>
            <person name="Yang L."/>
            <person name="Ye C."/>
            <person name="Zhang J."/>
            <person name="Xu J."/>
            <person name="Zhou Y."/>
            <person name="Yu Y."/>
            <person name="Zhang B."/>
            <person name="Zhuang S."/>
            <person name="Wei H."/>
            <person name="Liu B."/>
            <person name="Lei M."/>
            <person name="Yu H."/>
            <person name="Li Y."/>
            <person name="Xu H."/>
            <person name="Wei S."/>
            <person name="He X."/>
            <person name="Fang L."/>
            <person name="Zhang Z."/>
            <person name="Zhang Y."/>
            <person name="Huang X."/>
            <person name="Su Z."/>
            <person name="Tong W."/>
            <person name="Li J."/>
            <person name="Tong Z."/>
            <person name="Li S."/>
            <person name="Ye J."/>
            <person name="Wang L."/>
            <person name="Fang L."/>
            <person name="Lei T."/>
            <person name="Chen C.-S."/>
            <person name="Chen H.-C."/>
            <person name="Xu Z."/>
            <person name="Li H."/>
            <person name="Huang H."/>
            <person name="Zhang F."/>
            <person name="Xu H."/>
            <person name="Li N."/>
            <person name="Zhao C."/>
            <person name="Li S."/>
            <person name="Dong L."/>
            <person name="Huang Y."/>
            <person name="Li L."/>
            <person name="Xi Y."/>
            <person name="Qi Q."/>
            <person name="Li W."/>
            <person name="Zhang B."/>
            <person name="Hu W."/>
            <person name="Zhang Y."/>
            <person name="Tian X."/>
            <person name="Jiao Y."/>
            <person name="Liang X."/>
            <person name="Jin J."/>
            <person name="Gao L."/>
            <person name="Zheng W."/>
            <person name="Hao B."/>
            <person name="Liu S.-M."/>
            <person name="Wang W."/>
            <person name="Yuan L."/>
            <person name="Cao M."/>
            <person name="McDermott J."/>
            <person name="Samudrala R."/>
            <person name="Wang J."/>
            <person name="Wong G.K.-S."/>
            <person name="Yang H."/>
        </authorList>
    </citation>
    <scope>NUCLEOTIDE SEQUENCE [LARGE SCALE GENOMIC DNA]</scope>
    <source>
        <strain>cv. Nipponbare</strain>
    </source>
</reference>
<reference key="6">
    <citation type="journal article" date="2005" name="Science">
        <title>Cytokinin oxidase regulates rice grain production.</title>
        <authorList>
            <person name="Ashikari M."/>
            <person name="Sakakibara H."/>
            <person name="Lin S."/>
            <person name="Yamamoto T."/>
            <person name="Takashi T."/>
            <person name="Nishimura A."/>
            <person name="Angeles E.R."/>
            <person name="Qian Q."/>
            <person name="Kitano H."/>
            <person name="Matsuoka M."/>
        </authorList>
    </citation>
    <scope>TISSUE SPECIFICITY</scope>
    <scope>GENE FAMILY</scope>
    <scope>NOMENCLATURE</scope>
    <source>
        <strain>cv. Koshihikari</strain>
    </source>
</reference>
<reference key="7">
    <citation type="journal article" date="2019" name="Proc. Natl. Acad. Sci. U.S.A.">
        <title>Strigolactone promotes cytokinin degradation through transcriptional activation of CYTOKININ OXIDASE/DEHYDROGENASE 9 in rice.</title>
        <authorList>
            <person name="Duan J."/>
            <person name="Yu H."/>
            <person name="Yuan K."/>
            <person name="Liao Z."/>
            <person name="Meng X."/>
            <person name="Jing Y."/>
            <person name="Liu G."/>
            <person name="Chu J."/>
            <person name="Li J."/>
        </authorList>
    </citation>
    <scope>FUNCTION</scope>
    <scope>CATALYTIC ACTIVITY</scope>
    <scope>SUBCELLULAR LOCATION</scope>
    <scope>INDUCTION</scope>
</reference>
<sequence length="521" mass="58269">MRPSLLQYLKLLLLLALGGVTTMHVPKQDVPSSLEELTLDGHFSFHDVSAAAQDFGNLSSFPPVAVLHPGSVADIATTIRHVFLMGEHSTLTVAARGHGHSLYGQSQAAEGIIISMESLQSNTMRVNPGVSPYVDASGGELWINVLHETLKYGLAPKSWTDYLHLTVGGTLSNAGVSGQTFRHGPQISNVNELEIVTGRGDVITCSPEQNSDLFHAALGGLGQFGVITRARIPLEPAPKMVRWLRVLYLDFTSFTEDQEMLISAEKTFDYIEGFVIINRTGILNNWRSSFNPQDPVRSSQFESDGKVLFCLEMTKNFNPDEADVMEQEVNTLLSQLRYMPSSLFHTDVTYIEFLDRVHSSEMKLRAKGMWEVPHPWLNIIIPRSMIHKFAKEVFGKILKDSNNGPILLYPVNKSRWDNRTSVVIPDEEVFYLVAFLSSALGPHNIKHTLDLNYRIIEFSDKAGIGVKQYLPNYTTEQEWQSHFGARWDTFQQRKKAYDPLAILAPGQRIFQKASASLPLPS</sequence>
<feature type="signal peptide" evidence="5">
    <location>
        <begin position="1"/>
        <end position="22"/>
    </location>
</feature>
<feature type="chain" id="PRO_0000394213" description="Cytokinin dehydrogenase 9">
    <location>
        <begin position="23"/>
        <end position="521"/>
    </location>
</feature>
<feature type="domain" description="FAD-binding PCMH-type" evidence="6">
    <location>
        <begin position="59"/>
        <end position="237"/>
    </location>
</feature>
<feature type="binding site" evidence="3">
    <location>
        <position position="95"/>
    </location>
    <ligand>
        <name>FAD</name>
        <dbReference type="ChEBI" id="CHEBI:57692"/>
    </ligand>
</feature>
<feature type="binding site" evidence="4">
    <location>
        <position position="97"/>
    </location>
    <ligand>
        <name>FAD</name>
        <dbReference type="ChEBI" id="CHEBI:57692"/>
    </ligand>
</feature>
<feature type="binding site" evidence="4">
    <location>
        <position position="99"/>
    </location>
    <ligand>
        <name>FAD</name>
        <dbReference type="ChEBI" id="CHEBI:57692"/>
    </ligand>
</feature>
<feature type="binding site" evidence="4">
    <location>
        <position position="101"/>
    </location>
    <ligand>
        <name>FAD</name>
        <dbReference type="ChEBI" id="CHEBI:57692"/>
    </ligand>
</feature>
<feature type="binding site" evidence="4">
    <location>
        <position position="105"/>
    </location>
    <ligand>
        <name>FAD</name>
        <dbReference type="ChEBI" id="CHEBI:57692"/>
    </ligand>
</feature>
<feature type="binding site" evidence="4">
    <location>
        <position position="161"/>
    </location>
    <ligand>
        <name>FAD</name>
        <dbReference type="ChEBI" id="CHEBI:57692"/>
    </ligand>
</feature>
<feature type="binding site" evidence="4">
    <location>
        <position position="166"/>
    </location>
    <ligand>
        <name>FAD</name>
        <dbReference type="ChEBI" id="CHEBI:57692"/>
    </ligand>
</feature>
<feature type="binding site" evidence="4">
    <location>
        <position position="172"/>
    </location>
    <ligand>
        <name>FAD</name>
        <dbReference type="ChEBI" id="CHEBI:57692"/>
    </ligand>
</feature>
<feature type="binding site" evidence="4">
    <location>
        <position position="176"/>
    </location>
    <ligand>
        <name>FAD</name>
        <dbReference type="ChEBI" id="CHEBI:57692"/>
    </ligand>
</feature>
<feature type="binding site" evidence="4">
    <location>
        <position position="227"/>
    </location>
    <ligand>
        <name>FAD</name>
        <dbReference type="ChEBI" id="CHEBI:57692"/>
    </ligand>
</feature>
<feature type="binding site" evidence="4">
    <location>
        <position position="469"/>
    </location>
    <ligand>
        <name>FAD</name>
        <dbReference type="ChEBI" id="CHEBI:57692"/>
    </ligand>
</feature>
<feature type="binding site" evidence="4">
    <location>
        <position position="507"/>
    </location>
    <ligand>
        <name>FAD</name>
        <dbReference type="ChEBI" id="CHEBI:57692"/>
    </ligand>
</feature>
<feature type="modified residue" description="Pros-8alpha-FAD histidine" evidence="4">
    <location>
        <position position="100"/>
    </location>
</feature>
<feature type="glycosylation site" description="N-linked (GlcNAc...) asparagine" evidence="5">
    <location>
        <position position="57"/>
    </location>
</feature>
<feature type="glycosylation site" description="N-linked (GlcNAc...) asparagine" evidence="5">
    <location>
        <position position="278"/>
    </location>
</feature>
<feature type="glycosylation site" description="N-linked (GlcNAc...) asparagine" evidence="5">
    <location>
        <position position="412"/>
    </location>
</feature>
<feature type="glycosylation site" description="N-linked (GlcNAc...) asparagine" evidence="5">
    <location>
        <position position="418"/>
    </location>
</feature>
<feature type="glycosylation site" description="N-linked (GlcNAc...) asparagine" evidence="5">
    <location>
        <position position="472"/>
    </location>
</feature>
<protein>
    <recommendedName>
        <fullName evidence="9">Cytokinin dehydrogenase 9</fullName>
        <ecNumber evidence="8">1.5.99.12</ecNumber>
    </recommendedName>
    <alternativeName>
        <fullName evidence="9">Cytokinin oxidase 9</fullName>
        <shortName evidence="9">OsCKX9</shortName>
    </alternativeName>
</protein>
<keyword id="KW-0963">Cytoplasm</keyword>
<keyword id="KW-0274">FAD</keyword>
<keyword id="KW-0285">Flavoprotein</keyword>
<keyword id="KW-0325">Glycoprotein</keyword>
<keyword id="KW-0539">Nucleus</keyword>
<keyword id="KW-0560">Oxidoreductase</keyword>
<keyword id="KW-1185">Reference proteome</keyword>
<keyword id="KW-0964">Secreted</keyword>
<keyword id="KW-0732">Signal</keyword>
<evidence type="ECO:0000250" key="1"/>
<evidence type="ECO:0000250" key="2">
    <source>
        <dbReference type="UniProtKB" id="Q8LNV6"/>
    </source>
</evidence>
<evidence type="ECO:0000250" key="3">
    <source>
        <dbReference type="UniProtKB" id="Q9FUJ1"/>
    </source>
</evidence>
<evidence type="ECO:0000250" key="4">
    <source>
        <dbReference type="UniProtKB" id="Q9T0N8"/>
    </source>
</evidence>
<evidence type="ECO:0000255" key="5"/>
<evidence type="ECO:0000255" key="6">
    <source>
        <dbReference type="PROSITE-ProRule" id="PRU00718"/>
    </source>
</evidence>
<evidence type="ECO:0000269" key="7">
    <source>
    </source>
</evidence>
<evidence type="ECO:0000269" key="8">
    <source>
    </source>
</evidence>
<evidence type="ECO:0000303" key="9">
    <source>
    </source>
</evidence>
<evidence type="ECO:0000305" key="10"/>
<evidence type="ECO:0000305" key="11">
    <source>
    </source>
</evidence>
<evidence type="ECO:0000312" key="12">
    <source>
        <dbReference type="EMBL" id="AAT01339.1"/>
    </source>
</evidence>
<evidence type="ECO:0000312" key="13">
    <source>
        <dbReference type="EMBL" id="AAT58842.1"/>
    </source>
</evidence>
<evidence type="ECO:0000312" key="14">
    <source>
        <dbReference type="EMBL" id="BAS93715.1"/>
    </source>
</evidence>
<evidence type="ECO:0000312" key="15">
    <source>
        <dbReference type="EMBL" id="EEE63503.1"/>
    </source>
</evidence>
<name>CKX9_ORYSJ</name>
<organism>
    <name type="scientific">Oryza sativa subsp. japonica</name>
    <name type="common">Rice</name>
    <dbReference type="NCBI Taxonomy" id="39947"/>
    <lineage>
        <taxon>Eukaryota</taxon>
        <taxon>Viridiplantae</taxon>
        <taxon>Streptophyta</taxon>
        <taxon>Embryophyta</taxon>
        <taxon>Tracheophyta</taxon>
        <taxon>Spermatophyta</taxon>
        <taxon>Magnoliopsida</taxon>
        <taxon>Liliopsida</taxon>
        <taxon>Poales</taxon>
        <taxon>Poaceae</taxon>
        <taxon>BOP clade</taxon>
        <taxon>Oryzoideae</taxon>
        <taxon>Oryzeae</taxon>
        <taxon>Oryzinae</taxon>
        <taxon>Oryza</taxon>
        <taxon>Oryza sativa</taxon>
    </lineage>
</organism>
<comment type="function">
    <text evidence="8 11">Catalyzes the oxidation of cytokinins, a family of N(6)-substituted adenine derivatives that are plant hormones, where the substituent is an isopentenyl group (Probable). Possesses cytokinin oxidase activity toward trans-zeatin (tZ) and N6-(2-isopentenyl)adenine (2iP) in vitro (PubMed:31235564). Functions as a primary strigolactone-responsive gene to regulate rice tillering, plant height, and panicle size, likely via a secondary response gene, RR5, which encodes a cytokinin-inducible rice type-A response regulator that seems to act as negative regulator of the cytokinin signaling (PubMed:31235564).</text>
</comment>
<comment type="catalytic activity">
    <reaction evidence="8">
        <text>N(6)-dimethylallyladenine + A + H2O = 3-methyl-2-butenal + adenine + AH2</text>
        <dbReference type="Rhea" id="RHEA:13625"/>
        <dbReference type="ChEBI" id="CHEBI:13193"/>
        <dbReference type="ChEBI" id="CHEBI:15377"/>
        <dbReference type="ChEBI" id="CHEBI:15825"/>
        <dbReference type="ChEBI" id="CHEBI:16708"/>
        <dbReference type="ChEBI" id="CHEBI:17499"/>
        <dbReference type="ChEBI" id="CHEBI:17660"/>
        <dbReference type="EC" id="1.5.99.12"/>
    </reaction>
</comment>
<comment type="cofactor">
    <cofactor evidence="2">
        <name>FAD</name>
        <dbReference type="ChEBI" id="CHEBI:57692"/>
    </cofactor>
</comment>
<comment type="subunit">
    <text evidence="1">Monomer.</text>
</comment>
<comment type="subcellular location">
    <subcellularLocation>
        <location evidence="1">Secreted</location>
        <location evidence="1">Extracellular space</location>
    </subcellularLocation>
    <subcellularLocation>
        <location evidence="8">Cytoplasm</location>
        <location evidence="8">Cytosol</location>
    </subcellularLocation>
    <subcellularLocation>
        <location evidence="8">Nucleus</location>
    </subcellularLocation>
</comment>
<comment type="tissue specificity">
    <text evidence="7">Expressed in inflorescence meristems.</text>
</comment>
<comment type="induction">
    <text evidence="8">Induced by the synthetic strigolactone analog GR24.</text>
</comment>
<comment type="miscellaneous">
    <text evidence="8">Plants over-expressing CKX9 form short culms, increased number of tillers, decreased number of primary and secondary branches per panicle and have a very low seed setting rate.</text>
</comment>
<comment type="similarity">
    <text evidence="10">Belongs to the oxygen-dependent FAD-linked oxidoreductase family.</text>
</comment>
<accession>Q75K78</accession>
<accession>A0A0P0WLN0</accession>
<accession>Q0DIN8</accession>
<dbReference type="EC" id="1.5.99.12" evidence="8"/>
<dbReference type="EMBL" id="AC108874">
    <property type="protein sequence ID" value="AAT01339.1"/>
    <property type="molecule type" value="Genomic_DNA"/>
</dbReference>
<dbReference type="EMBL" id="AC119289">
    <property type="protein sequence ID" value="AAT58842.1"/>
    <property type="molecule type" value="Genomic_DNA"/>
</dbReference>
<dbReference type="EMBL" id="AP008211">
    <property type="protein sequence ID" value="BAF17285.2"/>
    <property type="molecule type" value="Genomic_DNA"/>
</dbReference>
<dbReference type="EMBL" id="AP014961">
    <property type="protein sequence ID" value="BAS93715.1"/>
    <property type="molecule type" value="Genomic_DNA"/>
</dbReference>
<dbReference type="EMBL" id="CM000142">
    <property type="protein sequence ID" value="EEE63503.1"/>
    <property type="molecule type" value="Genomic_DNA"/>
</dbReference>
<dbReference type="RefSeq" id="XP_015639136.1">
    <property type="nucleotide sequence ID" value="XM_015783650.1"/>
</dbReference>
<dbReference type="SMR" id="Q75K78"/>
<dbReference type="FunCoup" id="Q75K78">
    <property type="interactions" value="23"/>
</dbReference>
<dbReference type="STRING" id="39947.Q75K78"/>
<dbReference type="GlyCosmos" id="Q75K78">
    <property type="glycosylation" value="5 sites, No reported glycans"/>
</dbReference>
<dbReference type="PaxDb" id="39947-Q75K78"/>
<dbReference type="EnsemblPlants" id="Os05t0374200-01">
    <property type="protein sequence ID" value="Os05t0374200-01"/>
    <property type="gene ID" value="Os05g0374200"/>
</dbReference>
<dbReference type="Gramene" id="Os05t0374200-01">
    <property type="protein sequence ID" value="Os05t0374200-01"/>
    <property type="gene ID" value="Os05g0374200"/>
</dbReference>
<dbReference type="KEGG" id="dosa:Os05g0374200"/>
<dbReference type="eggNOG" id="KOG1231">
    <property type="taxonomic scope" value="Eukaryota"/>
</dbReference>
<dbReference type="HOGENOM" id="CLU_024955_1_0_1"/>
<dbReference type="InParanoid" id="Q75K78"/>
<dbReference type="OMA" id="TTIKHIW"/>
<dbReference type="OrthoDB" id="415825at2759"/>
<dbReference type="Proteomes" id="UP000000763">
    <property type="component" value="Chromosome 5"/>
</dbReference>
<dbReference type="Proteomes" id="UP000007752">
    <property type="component" value="Chromosome 5"/>
</dbReference>
<dbReference type="Proteomes" id="UP000059680">
    <property type="component" value="Chromosome 5"/>
</dbReference>
<dbReference type="GO" id="GO:0005829">
    <property type="term" value="C:cytosol"/>
    <property type="evidence" value="ECO:0007669"/>
    <property type="project" value="UniProtKB-SubCell"/>
</dbReference>
<dbReference type="GO" id="GO:0005576">
    <property type="term" value="C:extracellular region"/>
    <property type="evidence" value="ECO:0007669"/>
    <property type="project" value="UniProtKB-SubCell"/>
</dbReference>
<dbReference type="GO" id="GO:0005634">
    <property type="term" value="C:nucleus"/>
    <property type="evidence" value="ECO:0007669"/>
    <property type="project" value="UniProtKB-SubCell"/>
</dbReference>
<dbReference type="GO" id="GO:0019139">
    <property type="term" value="F:cytokinin dehydrogenase activity"/>
    <property type="evidence" value="ECO:0007669"/>
    <property type="project" value="UniProtKB-EC"/>
</dbReference>
<dbReference type="GO" id="GO:0071949">
    <property type="term" value="F:FAD binding"/>
    <property type="evidence" value="ECO:0007669"/>
    <property type="project" value="InterPro"/>
</dbReference>
<dbReference type="GO" id="GO:0016491">
    <property type="term" value="F:oxidoreductase activity"/>
    <property type="evidence" value="ECO:0000318"/>
    <property type="project" value="GO_Central"/>
</dbReference>
<dbReference type="GO" id="GO:0009690">
    <property type="term" value="P:cytokinin metabolic process"/>
    <property type="evidence" value="ECO:0007669"/>
    <property type="project" value="InterPro"/>
</dbReference>
<dbReference type="FunFam" id="3.40.462.10:FF:000001">
    <property type="entry name" value="Cytokinin dehydrogenase 2"/>
    <property type="match status" value="1"/>
</dbReference>
<dbReference type="Gene3D" id="3.30.465.10">
    <property type="match status" value="1"/>
</dbReference>
<dbReference type="Gene3D" id="3.40.462.10">
    <property type="entry name" value="FAD-linked oxidases, C-terminal domain"/>
    <property type="match status" value="1"/>
</dbReference>
<dbReference type="Gene3D" id="3.30.43.10">
    <property type="entry name" value="Uridine Diphospho-n-acetylenolpyruvylglucosamine Reductase, domain 2"/>
    <property type="match status" value="1"/>
</dbReference>
<dbReference type="InterPro" id="IPR016170">
    <property type="entry name" value="Cytok_DH_C_sf"/>
</dbReference>
<dbReference type="InterPro" id="IPR015345">
    <property type="entry name" value="Cytokinin_DH_FAD/cytokin-bd"/>
</dbReference>
<dbReference type="InterPro" id="IPR016166">
    <property type="entry name" value="FAD-bd_PCMH"/>
</dbReference>
<dbReference type="InterPro" id="IPR036318">
    <property type="entry name" value="FAD-bd_PCMH-like_sf"/>
</dbReference>
<dbReference type="InterPro" id="IPR016167">
    <property type="entry name" value="FAD-bd_PCMH_sub1"/>
</dbReference>
<dbReference type="InterPro" id="IPR016169">
    <property type="entry name" value="FAD-bd_PCMH_sub2"/>
</dbReference>
<dbReference type="InterPro" id="IPR016164">
    <property type="entry name" value="FAD-linked_Oxase-like_C"/>
</dbReference>
<dbReference type="InterPro" id="IPR050432">
    <property type="entry name" value="FAD-linked_Oxidoreductases_BP"/>
</dbReference>
<dbReference type="InterPro" id="IPR006094">
    <property type="entry name" value="Oxid_FAD_bind_N"/>
</dbReference>
<dbReference type="InterPro" id="IPR006093">
    <property type="entry name" value="Oxy_OxRdtase_FAD_BS"/>
</dbReference>
<dbReference type="PANTHER" id="PTHR13878:SF105">
    <property type="entry name" value="CYTOKININ DEHYDROGENASE 9"/>
    <property type="match status" value="1"/>
</dbReference>
<dbReference type="PANTHER" id="PTHR13878">
    <property type="entry name" value="GULONOLACTONE OXIDASE"/>
    <property type="match status" value="1"/>
</dbReference>
<dbReference type="Pfam" id="PF09265">
    <property type="entry name" value="Cytokin-bind"/>
    <property type="match status" value="1"/>
</dbReference>
<dbReference type="Pfam" id="PF01565">
    <property type="entry name" value="FAD_binding_4"/>
    <property type="match status" value="1"/>
</dbReference>
<dbReference type="SUPFAM" id="SSF56176">
    <property type="entry name" value="FAD-binding/transporter-associated domain-like"/>
    <property type="match status" value="1"/>
</dbReference>
<dbReference type="SUPFAM" id="SSF55103">
    <property type="entry name" value="FAD-linked oxidases, C-terminal domain"/>
    <property type="match status" value="1"/>
</dbReference>
<dbReference type="PROSITE" id="PS51387">
    <property type="entry name" value="FAD_PCMH"/>
    <property type="match status" value="1"/>
</dbReference>
<dbReference type="PROSITE" id="PS00862">
    <property type="entry name" value="OX2_COVAL_FAD"/>
    <property type="match status" value="1"/>
</dbReference>
<proteinExistence type="evidence at protein level"/>